<dbReference type="EC" id="4.2.1.59" evidence="1"/>
<dbReference type="EMBL" id="AE005673">
    <property type="protein sequence ID" value="AAK23887.1"/>
    <property type="molecule type" value="Genomic_DNA"/>
</dbReference>
<dbReference type="PIR" id="C87486">
    <property type="entry name" value="C87486"/>
</dbReference>
<dbReference type="RefSeq" id="NP_420719.1">
    <property type="nucleotide sequence ID" value="NC_002696.2"/>
</dbReference>
<dbReference type="RefSeq" id="WP_010919778.1">
    <property type="nucleotide sequence ID" value="NC_002696.2"/>
</dbReference>
<dbReference type="SMR" id="Q9A714"/>
<dbReference type="STRING" id="190650.CC_1912"/>
<dbReference type="EnsemblBacteria" id="AAK23887">
    <property type="protein sequence ID" value="AAK23887"/>
    <property type="gene ID" value="CC_1912"/>
</dbReference>
<dbReference type="KEGG" id="ccr:CC_1912"/>
<dbReference type="PATRIC" id="fig|190650.5.peg.1929"/>
<dbReference type="eggNOG" id="COG0764">
    <property type="taxonomic scope" value="Bacteria"/>
</dbReference>
<dbReference type="HOGENOM" id="CLU_078912_1_0_5"/>
<dbReference type="BioCyc" id="CAULO:CC1912-MONOMER"/>
<dbReference type="Proteomes" id="UP000001816">
    <property type="component" value="Chromosome"/>
</dbReference>
<dbReference type="GO" id="GO:0005737">
    <property type="term" value="C:cytoplasm"/>
    <property type="evidence" value="ECO:0007669"/>
    <property type="project" value="UniProtKB-SubCell"/>
</dbReference>
<dbReference type="GO" id="GO:0016020">
    <property type="term" value="C:membrane"/>
    <property type="evidence" value="ECO:0007669"/>
    <property type="project" value="GOC"/>
</dbReference>
<dbReference type="GO" id="GO:0019171">
    <property type="term" value="F:(3R)-hydroxyacyl-[acyl-carrier-protein] dehydratase activity"/>
    <property type="evidence" value="ECO:0007669"/>
    <property type="project" value="UniProtKB-EC"/>
</dbReference>
<dbReference type="GO" id="GO:0006633">
    <property type="term" value="P:fatty acid biosynthetic process"/>
    <property type="evidence" value="ECO:0007669"/>
    <property type="project" value="UniProtKB-UniRule"/>
</dbReference>
<dbReference type="GO" id="GO:0009245">
    <property type="term" value="P:lipid A biosynthetic process"/>
    <property type="evidence" value="ECO:0007669"/>
    <property type="project" value="UniProtKB-UniRule"/>
</dbReference>
<dbReference type="CDD" id="cd01288">
    <property type="entry name" value="FabZ"/>
    <property type="match status" value="1"/>
</dbReference>
<dbReference type="FunFam" id="3.10.129.10:FF:000001">
    <property type="entry name" value="3-hydroxyacyl-[acyl-carrier-protein] dehydratase FabZ"/>
    <property type="match status" value="1"/>
</dbReference>
<dbReference type="Gene3D" id="3.10.129.10">
    <property type="entry name" value="Hotdog Thioesterase"/>
    <property type="match status" value="1"/>
</dbReference>
<dbReference type="HAMAP" id="MF_00406">
    <property type="entry name" value="FabZ"/>
    <property type="match status" value="1"/>
</dbReference>
<dbReference type="InterPro" id="IPR013114">
    <property type="entry name" value="FabA_FabZ"/>
</dbReference>
<dbReference type="InterPro" id="IPR010084">
    <property type="entry name" value="FabZ"/>
</dbReference>
<dbReference type="InterPro" id="IPR029069">
    <property type="entry name" value="HotDog_dom_sf"/>
</dbReference>
<dbReference type="NCBIfam" id="TIGR01750">
    <property type="entry name" value="fabZ"/>
    <property type="match status" value="1"/>
</dbReference>
<dbReference type="NCBIfam" id="NF000582">
    <property type="entry name" value="PRK00006.1"/>
    <property type="match status" value="1"/>
</dbReference>
<dbReference type="PANTHER" id="PTHR30272">
    <property type="entry name" value="3-HYDROXYACYL-[ACYL-CARRIER-PROTEIN] DEHYDRATASE"/>
    <property type="match status" value="1"/>
</dbReference>
<dbReference type="PANTHER" id="PTHR30272:SF1">
    <property type="entry name" value="3-HYDROXYACYL-[ACYL-CARRIER-PROTEIN] DEHYDRATASE"/>
    <property type="match status" value="1"/>
</dbReference>
<dbReference type="Pfam" id="PF07977">
    <property type="entry name" value="FabA"/>
    <property type="match status" value="1"/>
</dbReference>
<dbReference type="SUPFAM" id="SSF54637">
    <property type="entry name" value="Thioesterase/thiol ester dehydrase-isomerase"/>
    <property type="match status" value="1"/>
</dbReference>
<reference key="1">
    <citation type="journal article" date="2001" name="Proc. Natl. Acad. Sci. U.S.A.">
        <title>Complete genome sequence of Caulobacter crescentus.</title>
        <authorList>
            <person name="Nierman W.C."/>
            <person name="Feldblyum T.V."/>
            <person name="Laub M.T."/>
            <person name="Paulsen I.T."/>
            <person name="Nelson K.E."/>
            <person name="Eisen J.A."/>
            <person name="Heidelberg J.F."/>
            <person name="Alley M.R.K."/>
            <person name="Ohta N."/>
            <person name="Maddock J.R."/>
            <person name="Potocka I."/>
            <person name="Nelson W.C."/>
            <person name="Newton A."/>
            <person name="Stephens C."/>
            <person name="Phadke N.D."/>
            <person name="Ely B."/>
            <person name="DeBoy R.T."/>
            <person name="Dodson R.J."/>
            <person name="Durkin A.S."/>
            <person name="Gwinn M.L."/>
            <person name="Haft D.H."/>
            <person name="Kolonay J.F."/>
            <person name="Smit J."/>
            <person name="Craven M.B."/>
            <person name="Khouri H.M."/>
            <person name="Shetty J."/>
            <person name="Berry K.J."/>
            <person name="Utterback T.R."/>
            <person name="Tran K."/>
            <person name="Wolf A.M."/>
            <person name="Vamathevan J.J."/>
            <person name="Ermolaeva M.D."/>
            <person name="White O."/>
            <person name="Salzberg S.L."/>
            <person name="Venter J.C."/>
            <person name="Shapiro L."/>
            <person name="Fraser C.M."/>
        </authorList>
    </citation>
    <scope>NUCLEOTIDE SEQUENCE [LARGE SCALE GENOMIC DNA]</scope>
    <source>
        <strain>ATCC 19089 / CIP 103742 / CB 15</strain>
    </source>
</reference>
<gene>
    <name evidence="1" type="primary">fabZ</name>
    <name type="ordered locus">CC_1912</name>
</gene>
<name>FABZ_CAUVC</name>
<accession>Q9A714</accession>
<protein>
    <recommendedName>
        <fullName evidence="1">3-hydroxyacyl-[acyl-carrier-protein] dehydratase FabZ</fullName>
        <ecNumber evidence="1">4.2.1.59</ecNumber>
    </recommendedName>
    <alternativeName>
        <fullName evidence="1">(3R)-hydroxymyristoyl-[acyl-carrier-protein] dehydratase</fullName>
        <shortName evidence="1">(3R)-hydroxymyristoyl-ACP dehydrase</shortName>
    </alternativeName>
    <alternativeName>
        <fullName evidence="1">Beta-hydroxyacyl-ACP dehydratase</fullName>
    </alternativeName>
</protein>
<sequence length="159" mass="17443">MGDNAEQAVQTDIDIAEILARIPHRYPFLLVDRAEDYNPHQSIVGIKCVTINEPFFQGHFPGNPVMPGVLIIEALAQTGAVLMSKSLEVDTEGKTIFFMSVDNARFRNPVRPGDVIRMEVEVLRARSSIFKFKGVAKVGDKVAAEAEFAAMVVETGPKA</sequence>
<keyword id="KW-0963">Cytoplasm</keyword>
<keyword id="KW-0441">Lipid A biosynthesis</keyword>
<keyword id="KW-0444">Lipid biosynthesis</keyword>
<keyword id="KW-0443">Lipid metabolism</keyword>
<keyword id="KW-0456">Lyase</keyword>
<keyword id="KW-1185">Reference proteome</keyword>
<comment type="function">
    <text evidence="1">Involved in unsaturated fatty acids biosynthesis. Catalyzes the dehydration of short chain beta-hydroxyacyl-ACPs and long chain saturated and unsaturated beta-hydroxyacyl-ACPs.</text>
</comment>
<comment type="catalytic activity">
    <reaction evidence="1">
        <text>a (3R)-hydroxyacyl-[ACP] = a (2E)-enoyl-[ACP] + H2O</text>
        <dbReference type="Rhea" id="RHEA:13097"/>
        <dbReference type="Rhea" id="RHEA-COMP:9925"/>
        <dbReference type="Rhea" id="RHEA-COMP:9945"/>
        <dbReference type="ChEBI" id="CHEBI:15377"/>
        <dbReference type="ChEBI" id="CHEBI:78784"/>
        <dbReference type="ChEBI" id="CHEBI:78827"/>
        <dbReference type="EC" id="4.2.1.59"/>
    </reaction>
</comment>
<comment type="subcellular location">
    <subcellularLocation>
        <location evidence="1">Cytoplasm</location>
    </subcellularLocation>
</comment>
<comment type="similarity">
    <text evidence="1">Belongs to the thioester dehydratase family. FabZ subfamily.</text>
</comment>
<organism>
    <name type="scientific">Caulobacter vibrioides (strain ATCC 19089 / CIP 103742 / CB 15)</name>
    <name type="common">Caulobacter crescentus</name>
    <dbReference type="NCBI Taxonomy" id="190650"/>
    <lineage>
        <taxon>Bacteria</taxon>
        <taxon>Pseudomonadati</taxon>
        <taxon>Pseudomonadota</taxon>
        <taxon>Alphaproteobacteria</taxon>
        <taxon>Caulobacterales</taxon>
        <taxon>Caulobacteraceae</taxon>
        <taxon>Caulobacter</taxon>
    </lineage>
</organism>
<evidence type="ECO:0000255" key="1">
    <source>
        <dbReference type="HAMAP-Rule" id="MF_00406"/>
    </source>
</evidence>
<proteinExistence type="inferred from homology"/>
<feature type="chain" id="PRO_0000091660" description="3-hydroxyacyl-[acyl-carrier-protein] dehydratase FabZ">
    <location>
        <begin position="1"/>
        <end position="159"/>
    </location>
</feature>
<feature type="active site" evidence="1">
    <location>
        <position position="59"/>
    </location>
</feature>